<comment type="function">
    <text evidence="1">Binds together with bS18 to 16S ribosomal RNA.</text>
</comment>
<comment type="similarity">
    <text evidence="1">Belongs to the bacterial ribosomal protein bS6 family.</text>
</comment>
<feature type="chain" id="PRO_1000005215" description="Small ribosomal subunit protein bS6">
    <location>
        <begin position="1"/>
        <end position="95"/>
    </location>
</feature>
<organism>
    <name type="scientific">Aster yellows witches'-broom phytoplasma (strain AYWB)</name>
    <dbReference type="NCBI Taxonomy" id="322098"/>
    <lineage>
        <taxon>Bacteria</taxon>
        <taxon>Bacillati</taxon>
        <taxon>Mycoplasmatota</taxon>
        <taxon>Mollicutes</taxon>
        <taxon>Acholeplasmatales</taxon>
        <taxon>Acholeplasmataceae</taxon>
        <taxon>Candidatus Phytoplasma</taxon>
        <taxon>16SrI (Aster yellows group)</taxon>
    </lineage>
</organism>
<protein>
    <recommendedName>
        <fullName evidence="1">Small ribosomal subunit protein bS6</fullName>
    </recommendedName>
    <alternativeName>
        <fullName evidence="2">30S ribosomal protein S6</fullName>
    </alternativeName>
</protein>
<gene>
    <name evidence="1" type="primary">rpsF</name>
    <name type="ordered locus">AYWB_003</name>
</gene>
<evidence type="ECO:0000255" key="1">
    <source>
        <dbReference type="HAMAP-Rule" id="MF_00360"/>
    </source>
</evidence>
<evidence type="ECO:0000305" key="2"/>
<dbReference type="EMBL" id="CP000061">
    <property type="protein sequence ID" value="ABC65120.1"/>
    <property type="molecule type" value="Genomic_DNA"/>
</dbReference>
<dbReference type="RefSeq" id="WP_011412287.1">
    <property type="nucleotide sequence ID" value="NC_007716.1"/>
</dbReference>
<dbReference type="SMR" id="Q2NKC3"/>
<dbReference type="STRING" id="322098.AYWB_003"/>
<dbReference type="KEGG" id="ayw:AYWB_003"/>
<dbReference type="eggNOG" id="COG0360">
    <property type="taxonomic scope" value="Bacteria"/>
</dbReference>
<dbReference type="HOGENOM" id="CLU_113441_5_3_14"/>
<dbReference type="OrthoDB" id="9812702at2"/>
<dbReference type="PhylomeDB" id="Q2NKC3"/>
<dbReference type="Proteomes" id="UP000001934">
    <property type="component" value="Chromosome"/>
</dbReference>
<dbReference type="GO" id="GO:1990904">
    <property type="term" value="C:ribonucleoprotein complex"/>
    <property type="evidence" value="ECO:0007669"/>
    <property type="project" value="UniProtKB-KW"/>
</dbReference>
<dbReference type="GO" id="GO:0005840">
    <property type="term" value="C:ribosome"/>
    <property type="evidence" value="ECO:0007669"/>
    <property type="project" value="UniProtKB-KW"/>
</dbReference>
<dbReference type="GO" id="GO:0019843">
    <property type="term" value="F:rRNA binding"/>
    <property type="evidence" value="ECO:0007669"/>
    <property type="project" value="UniProtKB-UniRule"/>
</dbReference>
<dbReference type="GO" id="GO:0003735">
    <property type="term" value="F:structural constituent of ribosome"/>
    <property type="evidence" value="ECO:0007669"/>
    <property type="project" value="InterPro"/>
</dbReference>
<dbReference type="GO" id="GO:0006412">
    <property type="term" value="P:translation"/>
    <property type="evidence" value="ECO:0007669"/>
    <property type="project" value="UniProtKB-UniRule"/>
</dbReference>
<dbReference type="CDD" id="cd00473">
    <property type="entry name" value="bS6"/>
    <property type="match status" value="1"/>
</dbReference>
<dbReference type="Gene3D" id="3.30.70.60">
    <property type="match status" value="1"/>
</dbReference>
<dbReference type="HAMAP" id="MF_00360">
    <property type="entry name" value="Ribosomal_bS6"/>
    <property type="match status" value="1"/>
</dbReference>
<dbReference type="InterPro" id="IPR000529">
    <property type="entry name" value="Ribosomal_bS6"/>
</dbReference>
<dbReference type="InterPro" id="IPR035980">
    <property type="entry name" value="Ribosomal_bS6_sf"/>
</dbReference>
<dbReference type="InterPro" id="IPR020814">
    <property type="entry name" value="Ribosomal_S6_plastid/chlpt"/>
</dbReference>
<dbReference type="InterPro" id="IPR014717">
    <property type="entry name" value="Transl_elong_EF1B/ribsomal_bS6"/>
</dbReference>
<dbReference type="NCBIfam" id="TIGR00166">
    <property type="entry name" value="S6"/>
    <property type="match status" value="1"/>
</dbReference>
<dbReference type="Pfam" id="PF01250">
    <property type="entry name" value="Ribosomal_S6"/>
    <property type="match status" value="1"/>
</dbReference>
<dbReference type="SUPFAM" id="SSF54995">
    <property type="entry name" value="Ribosomal protein S6"/>
    <property type="match status" value="1"/>
</dbReference>
<name>RS6_AYWBP</name>
<sequence>MKKYEIMYILRPNLDNKYVKKINDTLQNVFLQAPNQILEQKEIGLKDLTYFIDNHKKGYYNWLMVKADNDAVLEFNRIVKITEEIIRFIVIKDKE</sequence>
<reference key="1">
    <citation type="journal article" date="2006" name="J. Bacteriol.">
        <title>Living with genome instability: the adaptation of phytoplasmas to diverse environments of their insect and plant hosts.</title>
        <authorList>
            <person name="Bai X."/>
            <person name="Zhang J."/>
            <person name="Ewing A."/>
            <person name="Miller S.A."/>
            <person name="Jancso Radek A."/>
            <person name="Shevchenko D.V."/>
            <person name="Tsukerman K."/>
            <person name="Walunas T."/>
            <person name="Lapidus A."/>
            <person name="Campbell J.W."/>
            <person name="Hogenhout S.A."/>
        </authorList>
    </citation>
    <scope>NUCLEOTIDE SEQUENCE [LARGE SCALE GENOMIC DNA]</scope>
    <source>
        <strain>AYWB</strain>
    </source>
</reference>
<proteinExistence type="inferred from homology"/>
<accession>Q2NKC3</accession>
<keyword id="KW-0687">Ribonucleoprotein</keyword>
<keyword id="KW-0689">Ribosomal protein</keyword>
<keyword id="KW-0694">RNA-binding</keyword>
<keyword id="KW-0699">rRNA-binding</keyword>